<reference key="1">
    <citation type="journal article" date="2007" name="Nat. Biotechnol.">
        <title>Comparative analysis of the complete genome sequence of the plant growth-promoting bacterium Bacillus amyloliquefaciens FZB42.</title>
        <authorList>
            <person name="Chen X.H."/>
            <person name="Koumoutsi A."/>
            <person name="Scholz R."/>
            <person name="Eisenreich A."/>
            <person name="Schneider K."/>
            <person name="Heinemeyer I."/>
            <person name="Morgenstern B."/>
            <person name="Voss B."/>
            <person name="Hess W.R."/>
            <person name="Reva O."/>
            <person name="Junge H."/>
            <person name="Voigt B."/>
            <person name="Jungblut P.R."/>
            <person name="Vater J."/>
            <person name="Suessmuth R."/>
            <person name="Liesegang H."/>
            <person name="Strittmatter A."/>
            <person name="Gottschalk G."/>
            <person name="Borriss R."/>
        </authorList>
    </citation>
    <scope>NUCLEOTIDE SEQUENCE [LARGE SCALE GENOMIC DNA]</scope>
    <source>
        <strain>DSM 23117 / BGSC 10A6 / LMG 26770 / FZB42</strain>
    </source>
</reference>
<name>HIS5_BACVZ</name>
<proteinExistence type="inferred from homology"/>
<protein>
    <recommendedName>
        <fullName evidence="1">Imidazole glycerol phosphate synthase subunit HisH</fullName>
        <ecNumber evidence="1">4.3.2.10</ecNumber>
    </recommendedName>
    <alternativeName>
        <fullName evidence="1">IGP synthase glutaminase subunit</fullName>
        <ecNumber evidence="1">3.5.1.2</ecNumber>
    </alternativeName>
    <alternativeName>
        <fullName evidence="1">IGP synthase subunit HisH</fullName>
    </alternativeName>
    <alternativeName>
        <fullName evidence="1">ImGP synthase subunit HisH</fullName>
        <shortName evidence="1">IGPS subunit HisH</shortName>
    </alternativeName>
</protein>
<keyword id="KW-0028">Amino-acid biosynthesis</keyword>
<keyword id="KW-0963">Cytoplasm</keyword>
<keyword id="KW-0315">Glutamine amidotransferase</keyword>
<keyword id="KW-0368">Histidine biosynthesis</keyword>
<keyword id="KW-0378">Hydrolase</keyword>
<keyword id="KW-0456">Lyase</keyword>
<dbReference type="EC" id="4.3.2.10" evidence="1"/>
<dbReference type="EC" id="3.5.1.2" evidence="1"/>
<dbReference type="EMBL" id="CP000560">
    <property type="protein sequence ID" value="ABS75540.1"/>
    <property type="molecule type" value="Genomic_DNA"/>
</dbReference>
<dbReference type="RefSeq" id="WP_012118545.1">
    <property type="nucleotide sequence ID" value="NC_009725.2"/>
</dbReference>
<dbReference type="SMR" id="A7Z964"/>
<dbReference type="GeneID" id="93082355"/>
<dbReference type="KEGG" id="bay:RBAM_032100"/>
<dbReference type="HOGENOM" id="CLU_071837_2_2_9"/>
<dbReference type="UniPathway" id="UPA00031">
    <property type="reaction ID" value="UER00010"/>
</dbReference>
<dbReference type="Proteomes" id="UP000001120">
    <property type="component" value="Chromosome"/>
</dbReference>
<dbReference type="GO" id="GO:0005737">
    <property type="term" value="C:cytoplasm"/>
    <property type="evidence" value="ECO:0007669"/>
    <property type="project" value="UniProtKB-SubCell"/>
</dbReference>
<dbReference type="GO" id="GO:0004359">
    <property type="term" value="F:glutaminase activity"/>
    <property type="evidence" value="ECO:0007669"/>
    <property type="project" value="UniProtKB-EC"/>
</dbReference>
<dbReference type="GO" id="GO:0000107">
    <property type="term" value="F:imidazoleglycerol-phosphate synthase activity"/>
    <property type="evidence" value="ECO:0007669"/>
    <property type="project" value="UniProtKB-UniRule"/>
</dbReference>
<dbReference type="GO" id="GO:0016829">
    <property type="term" value="F:lyase activity"/>
    <property type="evidence" value="ECO:0007669"/>
    <property type="project" value="UniProtKB-KW"/>
</dbReference>
<dbReference type="GO" id="GO:0000105">
    <property type="term" value="P:L-histidine biosynthetic process"/>
    <property type="evidence" value="ECO:0007669"/>
    <property type="project" value="UniProtKB-UniRule"/>
</dbReference>
<dbReference type="CDD" id="cd01748">
    <property type="entry name" value="GATase1_IGP_Synthase"/>
    <property type="match status" value="1"/>
</dbReference>
<dbReference type="Gene3D" id="3.40.50.880">
    <property type="match status" value="1"/>
</dbReference>
<dbReference type="HAMAP" id="MF_00278">
    <property type="entry name" value="HisH"/>
    <property type="match status" value="1"/>
</dbReference>
<dbReference type="InterPro" id="IPR029062">
    <property type="entry name" value="Class_I_gatase-like"/>
</dbReference>
<dbReference type="InterPro" id="IPR017926">
    <property type="entry name" value="GATASE"/>
</dbReference>
<dbReference type="InterPro" id="IPR010139">
    <property type="entry name" value="Imidazole-glycPsynth_HisH"/>
</dbReference>
<dbReference type="NCBIfam" id="TIGR01855">
    <property type="entry name" value="IMP_synth_hisH"/>
    <property type="match status" value="1"/>
</dbReference>
<dbReference type="PANTHER" id="PTHR42701">
    <property type="entry name" value="IMIDAZOLE GLYCEROL PHOSPHATE SYNTHASE SUBUNIT HISH"/>
    <property type="match status" value="1"/>
</dbReference>
<dbReference type="PANTHER" id="PTHR42701:SF1">
    <property type="entry name" value="IMIDAZOLE GLYCEROL PHOSPHATE SYNTHASE SUBUNIT HISH"/>
    <property type="match status" value="1"/>
</dbReference>
<dbReference type="Pfam" id="PF00117">
    <property type="entry name" value="GATase"/>
    <property type="match status" value="1"/>
</dbReference>
<dbReference type="PIRSF" id="PIRSF000495">
    <property type="entry name" value="Amidotransf_hisH"/>
    <property type="match status" value="1"/>
</dbReference>
<dbReference type="SUPFAM" id="SSF52317">
    <property type="entry name" value="Class I glutamine amidotransferase-like"/>
    <property type="match status" value="1"/>
</dbReference>
<dbReference type="PROSITE" id="PS51273">
    <property type="entry name" value="GATASE_TYPE_1"/>
    <property type="match status" value="1"/>
</dbReference>
<sequence length="212" mass="23259">MIGVIDYGMGNLFSVSKALERVGVPYVVSDRPEELEKADAFILPGVGSFSDAMDNLRRAKLDQFIHRMVDEGKLLLGICLGMQLIFEESTENGSAKGLGLLAGKAVRLKDRDAEGNKLKVPHMGWNRLTFHQTSPLLSEAEEGFVYFVHSYYIDGMEDGDLLASAEYGVRVPAVVGKRNVFGAQFHPEKSGTAGMAILTQFTKMAAEQQVKK</sequence>
<comment type="function">
    <text evidence="1">IGPS catalyzes the conversion of PRFAR and glutamine to IGP, AICAR and glutamate. The HisH subunit catalyzes the hydrolysis of glutamine to glutamate and ammonia as part of the synthesis of IGP and AICAR. The resulting ammonia molecule is channeled to the active site of HisF.</text>
</comment>
<comment type="catalytic activity">
    <reaction evidence="1">
        <text>5-[(5-phospho-1-deoxy-D-ribulos-1-ylimino)methylamino]-1-(5-phospho-beta-D-ribosyl)imidazole-4-carboxamide + L-glutamine = D-erythro-1-(imidazol-4-yl)glycerol 3-phosphate + 5-amino-1-(5-phospho-beta-D-ribosyl)imidazole-4-carboxamide + L-glutamate + H(+)</text>
        <dbReference type="Rhea" id="RHEA:24793"/>
        <dbReference type="ChEBI" id="CHEBI:15378"/>
        <dbReference type="ChEBI" id="CHEBI:29985"/>
        <dbReference type="ChEBI" id="CHEBI:58278"/>
        <dbReference type="ChEBI" id="CHEBI:58359"/>
        <dbReference type="ChEBI" id="CHEBI:58475"/>
        <dbReference type="ChEBI" id="CHEBI:58525"/>
        <dbReference type="EC" id="4.3.2.10"/>
    </reaction>
</comment>
<comment type="catalytic activity">
    <reaction evidence="1">
        <text>L-glutamine + H2O = L-glutamate + NH4(+)</text>
        <dbReference type="Rhea" id="RHEA:15889"/>
        <dbReference type="ChEBI" id="CHEBI:15377"/>
        <dbReference type="ChEBI" id="CHEBI:28938"/>
        <dbReference type="ChEBI" id="CHEBI:29985"/>
        <dbReference type="ChEBI" id="CHEBI:58359"/>
        <dbReference type="EC" id="3.5.1.2"/>
    </reaction>
</comment>
<comment type="pathway">
    <text evidence="1">Amino-acid biosynthesis; L-histidine biosynthesis; L-histidine from 5-phospho-alpha-D-ribose 1-diphosphate: step 5/9.</text>
</comment>
<comment type="subunit">
    <text evidence="1">Heterodimer of HisH and HisF.</text>
</comment>
<comment type="subcellular location">
    <subcellularLocation>
        <location evidence="1">Cytoplasm</location>
    </subcellularLocation>
</comment>
<accession>A7Z964</accession>
<organism>
    <name type="scientific">Bacillus velezensis (strain DSM 23117 / BGSC 10A6 / LMG 26770 / FZB42)</name>
    <name type="common">Bacillus amyloliquefaciens subsp. plantarum</name>
    <dbReference type="NCBI Taxonomy" id="326423"/>
    <lineage>
        <taxon>Bacteria</taxon>
        <taxon>Bacillati</taxon>
        <taxon>Bacillota</taxon>
        <taxon>Bacilli</taxon>
        <taxon>Bacillales</taxon>
        <taxon>Bacillaceae</taxon>
        <taxon>Bacillus</taxon>
        <taxon>Bacillus amyloliquefaciens group</taxon>
    </lineage>
</organism>
<feature type="chain" id="PRO_1000114772" description="Imidazole glycerol phosphate synthase subunit HisH">
    <location>
        <begin position="1"/>
        <end position="212"/>
    </location>
</feature>
<feature type="domain" description="Glutamine amidotransferase type-1" evidence="1">
    <location>
        <begin position="1"/>
        <end position="211"/>
    </location>
</feature>
<feature type="active site" description="Nucleophile" evidence="1">
    <location>
        <position position="79"/>
    </location>
</feature>
<feature type="active site" evidence="1">
    <location>
        <position position="186"/>
    </location>
</feature>
<feature type="active site" evidence="1">
    <location>
        <position position="188"/>
    </location>
</feature>
<gene>
    <name evidence="1" type="primary">hisH</name>
    <name type="ordered locus">RBAM_032100</name>
</gene>
<evidence type="ECO:0000255" key="1">
    <source>
        <dbReference type="HAMAP-Rule" id="MF_00278"/>
    </source>
</evidence>